<proteinExistence type="inferred from homology"/>
<reference key="1">
    <citation type="journal article" date="2006" name="PLoS Genet.">
        <title>Genome sequence of Rickettsia bellii illuminates the role of amoebae in gene exchanges between intracellular pathogens.</title>
        <authorList>
            <person name="Ogata H."/>
            <person name="La Scola B."/>
            <person name="Audic S."/>
            <person name="Renesto P."/>
            <person name="Blanc G."/>
            <person name="Robert C."/>
            <person name="Fournier P.-E."/>
            <person name="Claverie J.-M."/>
            <person name="Raoult D."/>
        </authorList>
    </citation>
    <scope>NUCLEOTIDE SEQUENCE [LARGE SCALE GENOMIC DNA]</scope>
    <source>
        <strain>RML369-C</strain>
    </source>
</reference>
<dbReference type="EC" id="5.1.1.1" evidence="1"/>
<dbReference type="EMBL" id="CP000087">
    <property type="protein sequence ID" value="ABE05420.1"/>
    <property type="molecule type" value="Genomic_DNA"/>
</dbReference>
<dbReference type="RefSeq" id="WP_011477989.1">
    <property type="nucleotide sequence ID" value="NC_007940.1"/>
</dbReference>
<dbReference type="SMR" id="Q1RGU4"/>
<dbReference type="KEGG" id="rbe:RBE_1339"/>
<dbReference type="eggNOG" id="COG0787">
    <property type="taxonomic scope" value="Bacteria"/>
</dbReference>
<dbReference type="HOGENOM" id="CLU_028393_1_1_5"/>
<dbReference type="OrthoDB" id="9813814at2"/>
<dbReference type="UniPathway" id="UPA00042">
    <property type="reaction ID" value="UER00497"/>
</dbReference>
<dbReference type="Proteomes" id="UP000001951">
    <property type="component" value="Chromosome"/>
</dbReference>
<dbReference type="GO" id="GO:0005829">
    <property type="term" value="C:cytosol"/>
    <property type="evidence" value="ECO:0007669"/>
    <property type="project" value="TreeGrafter"/>
</dbReference>
<dbReference type="GO" id="GO:0008784">
    <property type="term" value="F:alanine racemase activity"/>
    <property type="evidence" value="ECO:0007669"/>
    <property type="project" value="UniProtKB-UniRule"/>
</dbReference>
<dbReference type="GO" id="GO:0030170">
    <property type="term" value="F:pyridoxal phosphate binding"/>
    <property type="evidence" value="ECO:0007669"/>
    <property type="project" value="UniProtKB-UniRule"/>
</dbReference>
<dbReference type="GO" id="GO:0030632">
    <property type="term" value="P:D-alanine biosynthetic process"/>
    <property type="evidence" value="ECO:0007669"/>
    <property type="project" value="UniProtKB-UniRule"/>
</dbReference>
<dbReference type="CDD" id="cd00430">
    <property type="entry name" value="PLPDE_III_AR"/>
    <property type="match status" value="1"/>
</dbReference>
<dbReference type="Gene3D" id="3.20.20.10">
    <property type="entry name" value="Alanine racemase"/>
    <property type="match status" value="1"/>
</dbReference>
<dbReference type="Gene3D" id="2.40.37.10">
    <property type="entry name" value="Lyase, Ornithine Decarboxylase, Chain A, domain 1"/>
    <property type="match status" value="1"/>
</dbReference>
<dbReference type="HAMAP" id="MF_01201">
    <property type="entry name" value="Ala_racemase"/>
    <property type="match status" value="1"/>
</dbReference>
<dbReference type="InterPro" id="IPR000821">
    <property type="entry name" value="Ala_racemase"/>
</dbReference>
<dbReference type="InterPro" id="IPR009006">
    <property type="entry name" value="Ala_racemase/Decarboxylase_C"/>
</dbReference>
<dbReference type="InterPro" id="IPR011079">
    <property type="entry name" value="Ala_racemase_C"/>
</dbReference>
<dbReference type="InterPro" id="IPR001608">
    <property type="entry name" value="Ala_racemase_N"/>
</dbReference>
<dbReference type="InterPro" id="IPR029066">
    <property type="entry name" value="PLP-binding_barrel"/>
</dbReference>
<dbReference type="InterPro" id="IPR005728">
    <property type="entry name" value="RPE1"/>
</dbReference>
<dbReference type="NCBIfam" id="TIGR00492">
    <property type="entry name" value="alr"/>
    <property type="match status" value="1"/>
</dbReference>
<dbReference type="NCBIfam" id="NF000792">
    <property type="entry name" value="PRK00053.2-3"/>
    <property type="match status" value="1"/>
</dbReference>
<dbReference type="NCBIfam" id="TIGR01045">
    <property type="entry name" value="RPE1"/>
    <property type="match status" value="1"/>
</dbReference>
<dbReference type="PANTHER" id="PTHR30511">
    <property type="entry name" value="ALANINE RACEMASE"/>
    <property type="match status" value="1"/>
</dbReference>
<dbReference type="PANTHER" id="PTHR30511:SF0">
    <property type="entry name" value="ALANINE RACEMASE, CATABOLIC-RELATED"/>
    <property type="match status" value="1"/>
</dbReference>
<dbReference type="Pfam" id="PF00842">
    <property type="entry name" value="Ala_racemase_C"/>
    <property type="match status" value="1"/>
</dbReference>
<dbReference type="Pfam" id="PF01168">
    <property type="entry name" value="Ala_racemase_N"/>
    <property type="match status" value="1"/>
</dbReference>
<dbReference type="PRINTS" id="PR00992">
    <property type="entry name" value="ALARACEMASE"/>
</dbReference>
<dbReference type="SMART" id="SM01005">
    <property type="entry name" value="Ala_racemase_C"/>
    <property type="match status" value="1"/>
</dbReference>
<dbReference type="SUPFAM" id="SSF50621">
    <property type="entry name" value="Alanine racemase C-terminal domain-like"/>
    <property type="match status" value="1"/>
</dbReference>
<dbReference type="SUPFAM" id="SSF51419">
    <property type="entry name" value="PLP-binding barrel"/>
    <property type="match status" value="1"/>
</dbReference>
<sequence>MSLCTLEINLSAIKANYRLLKNICENSVDFLHNVANKEEFAGNTSPRTAAYTLVREDASLGSTPKLPLGASYAKNLLVGAAVKANSYGLGAIEISKTLLEENCRYFFVASSNEGISLRKAIGDEVNILILNGVFEHDALELIEYNLIPVLNNLNQIKIWQKFSNLKNQLLPCYLHFNTGINRLGLNHNEIEQLINNRDLLKGLNVEYIISHLSASEDSDNPYNLEQLNKFKAYLEYFPNAKASLANSGGIFLGKDYHFNLVRPGAALYGLNPLGSNKPNPMQNPVTLKAPIIHLQNLTYGSRIGYNMTFTTKRDSLIATLPFGYADGFSRNFSNQGTVFINSRNVPIIGRISMDLVNIDVTDLPPSDIFLGQEVEIIGNNCTPDKIADIIGTIGYEILTSLGNRYKRIYT</sequence>
<organism>
    <name type="scientific">Rickettsia bellii (strain RML369-C)</name>
    <dbReference type="NCBI Taxonomy" id="336407"/>
    <lineage>
        <taxon>Bacteria</taxon>
        <taxon>Pseudomonadati</taxon>
        <taxon>Pseudomonadota</taxon>
        <taxon>Alphaproteobacteria</taxon>
        <taxon>Rickettsiales</taxon>
        <taxon>Rickettsiaceae</taxon>
        <taxon>Rickettsieae</taxon>
        <taxon>Rickettsia</taxon>
        <taxon>belli group</taxon>
    </lineage>
</organism>
<feature type="chain" id="PRO_0000272404" description="Alanine racemase">
    <location>
        <begin position="1"/>
        <end position="410"/>
    </location>
</feature>
<feature type="domain" description="RPE1 insert">
    <location>
        <begin position="28"/>
        <end position="76"/>
    </location>
</feature>
<feature type="active site" description="Proton acceptor; specific for D-alanine" evidence="1">
    <location>
        <position position="83"/>
    </location>
</feature>
<feature type="active site" description="Proton acceptor; specific for L-alanine" evidence="1">
    <location>
        <position position="305"/>
    </location>
</feature>
<feature type="binding site" evidence="1">
    <location>
        <position position="182"/>
    </location>
    <ligand>
        <name>substrate</name>
    </ligand>
</feature>
<feature type="binding site" evidence="1">
    <location>
        <position position="353"/>
    </location>
    <ligand>
        <name>substrate</name>
    </ligand>
</feature>
<feature type="modified residue" description="N6-(pyridoxal phosphate)lysine" evidence="1">
    <location>
        <position position="83"/>
    </location>
</feature>
<comment type="function">
    <text evidence="1">Catalyzes the interconversion of L-alanine and D-alanine. May also act on other amino acids.</text>
</comment>
<comment type="catalytic activity">
    <reaction evidence="1">
        <text>L-alanine = D-alanine</text>
        <dbReference type="Rhea" id="RHEA:20249"/>
        <dbReference type="ChEBI" id="CHEBI:57416"/>
        <dbReference type="ChEBI" id="CHEBI:57972"/>
        <dbReference type="EC" id="5.1.1.1"/>
    </reaction>
</comment>
<comment type="cofactor">
    <cofactor evidence="1">
        <name>pyridoxal 5'-phosphate</name>
        <dbReference type="ChEBI" id="CHEBI:597326"/>
    </cofactor>
</comment>
<comment type="pathway">
    <text evidence="1">Amino-acid biosynthesis; D-alanine biosynthesis; D-alanine from L-alanine: step 1/1.</text>
</comment>
<comment type="similarity">
    <text evidence="1">Belongs to the alanine racemase family.</text>
</comment>
<evidence type="ECO:0000255" key="1">
    <source>
        <dbReference type="HAMAP-Rule" id="MF_01201"/>
    </source>
</evidence>
<accession>Q1RGU4</accession>
<keyword id="KW-0413">Isomerase</keyword>
<keyword id="KW-0663">Pyridoxal phosphate</keyword>
<gene>
    <name type="primary">alr</name>
    <name type="ordered locus">RBE_1339</name>
</gene>
<name>ALR_RICBR</name>
<protein>
    <recommendedName>
        <fullName evidence="1">Alanine racemase</fullName>
        <ecNumber evidence="1">5.1.1.1</ecNumber>
    </recommendedName>
</protein>